<evidence type="ECO:0000250" key="1">
    <source>
        <dbReference type="UniProtKB" id="P0AD99"/>
    </source>
</evidence>
<evidence type="ECO:0000255" key="2"/>
<evidence type="ECO:0000305" key="3"/>
<reference key="1">
    <citation type="journal article" date="1995" name="Science">
        <title>Whole-genome random sequencing and assembly of Haemophilus influenzae Rd.</title>
        <authorList>
            <person name="Fleischmann R.D."/>
            <person name="Adams M.D."/>
            <person name="White O."/>
            <person name="Clayton R.A."/>
            <person name="Kirkness E.F."/>
            <person name="Kerlavage A.R."/>
            <person name="Bult C.J."/>
            <person name="Tomb J.-F."/>
            <person name="Dougherty B.A."/>
            <person name="Merrick J.M."/>
            <person name="McKenney K."/>
            <person name="Sutton G.G."/>
            <person name="FitzHugh W."/>
            <person name="Fields C.A."/>
            <person name="Gocayne J.D."/>
            <person name="Scott J.D."/>
            <person name="Shirley R."/>
            <person name="Liu L.-I."/>
            <person name="Glodek A."/>
            <person name="Kelley J.M."/>
            <person name="Weidman J.F."/>
            <person name="Phillips C.A."/>
            <person name="Spriggs T."/>
            <person name="Hedblom E."/>
            <person name="Cotton M.D."/>
            <person name="Utterback T.R."/>
            <person name="Hanna M.C."/>
            <person name="Nguyen D.T."/>
            <person name="Saudek D.M."/>
            <person name="Brandon R.C."/>
            <person name="Fine L.D."/>
            <person name="Fritchman J.L."/>
            <person name="Fuhrmann J.L."/>
            <person name="Geoghagen N.S.M."/>
            <person name="Gnehm C.L."/>
            <person name="McDonald L.A."/>
            <person name="Small K.V."/>
            <person name="Fraser C.M."/>
            <person name="Smith H.O."/>
            <person name="Venter J.C."/>
        </authorList>
    </citation>
    <scope>NUCLEOTIDE SEQUENCE [LARGE SCALE GENOMIC DNA]</scope>
    <source>
        <strain>ATCC 51907 / DSM 11121 / KW20 / Rd</strain>
    </source>
</reference>
<accession>P71345</accession>
<protein>
    <recommendedName>
        <fullName evidence="3">Branched-chain amino acid permease BrnQ</fullName>
        <shortName evidence="3">BCAA permease</shortName>
    </recommendedName>
    <alternativeName>
        <fullName>Branched-chain amino acid transport system carrier protein</fullName>
    </alternativeName>
    <alternativeName>
        <fullName>Branched-chain amino acid uptake carrier</fullName>
    </alternativeName>
</protein>
<proteinExistence type="inferred from homology"/>
<organism>
    <name type="scientific">Haemophilus influenzae (strain ATCC 51907 / DSM 11121 / KW20 / Rd)</name>
    <dbReference type="NCBI Taxonomy" id="71421"/>
    <lineage>
        <taxon>Bacteria</taxon>
        <taxon>Pseudomonadati</taxon>
        <taxon>Pseudomonadota</taxon>
        <taxon>Gammaproteobacteria</taxon>
        <taxon>Pasteurellales</taxon>
        <taxon>Pasteurellaceae</taxon>
        <taxon>Haemophilus</taxon>
    </lineage>
</organism>
<gene>
    <name type="primary">brnQ</name>
    <name type="ordered locus">HI_0226</name>
</gene>
<keyword id="KW-0029">Amino-acid transport</keyword>
<keyword id="KW-0997">Cell inner membrane</keyword>
<keyword id="KW-1003">Cell membrane</keyword>
<keyword id="KW-0472">Membrane</keyword>
<keyword id="KW-1185">Reference proteome</keyword>
<keyword id="KW-0812">Transmembrane</keyword>
<keyword id="KW-1133">Transmembrane helix</keyword>
<keyword id="KW-0813">Transport</keyword>
<name>BRNQ_HAEIN</name>
<comment type="function">
    <text evidence="1">Branched chain amino acid transport system, which transports leucine, valine and isoleucine.</text>
</comment>
<comment type="subcellular location">
    <subcellularLocation>
        <location evidence="1">Cell inner membrane</location>
        <topology evidence="2">Multi-pass membrane protein</topology>
    </subcellularLocation>
</comment>
<comment type="similarity">
    <text evidence="3">Belongs to the branched chain amino acid transporter family.</text>
</comment>
<feature type="chain" id="PRO_0000099769" description="Branched-chain amino acid permease BrnQ">
    <location>
        <begin position="1"/>
        <end position="436"/>
    </location>
</feature>
<feature type="transmembrane region" description="Helical" evidence="2">
    <location>
        <begin position="7"/>
        <end position="27"/>
    </location>
</feature>
<feature type="transmembrane region" description="Helical" evidence="2">
    <location>
        <begin position="43"/>
        <end position="63"/>
    </location>
</feature>
<feature type="transmembrane region" description="Helical" evidence="2">
    <location>
        <begin position="76"/>
        <end position="96"/>
    </location>
</feature>
<feature type="transmembrane region" description="Helical" evidence="2">
    <location>
        <begin position="122"/>
        <end position="142"/>
    </location>
</feature>
<feature type="transmembrane region" description="Helical" evidence="2">
    <location>
        <begin position="148"/>
        <end position="168"/>
    </location>
</feature>
<feature type="transmembrane region" description="Helical" evidence="2">
    <location>
        <begin position="185"/>
        <end position="205"/>
    </location>
</feature>
<feature type="transmembrane region" description="Helical" evidence="2">
    <location>
        <begin position="228"/>
        <end position="248"/>
    </location>
</feature>
<feature type="transmembrane region" description="Helical" evidence="2">
    <location>
        <begin position="277"/>
        <end position="297"/>
    </location>
</feature>
<feature type="transmembrane region" description="Helical" evidence="2">
    <location>
        <begin position="314"/>
        <end position="334"/>
    </location>
</feature>
<feature type="transmembrane region" description="Helical" evidence="2">
    <location>
        <begin position="339"/>
        <end position="359"/>
    </location>
</feature>
<feature type="transmembrane region" description="Helical" evidence="2">
    <location>
        <begin position="411"/>
        <end position="431"/>
    </location>
</feature>
<sequence>MFSRKDIIVLGMMIFALFLGAGNIIFPPMEGFSSGQHWTSASLGFVLTGVLMPFITLVVVAILGRGEELTKDLPKWAGTGFLVILYLTIGSTFAMPRITNVAYEMAWLPLGLTENNANVRFVFSLIFNLIAMGFMISPNTIISSVGKFMTPALLVLLIAVAITVFISPLSEIQAPSNAYENSHSLLIGLTSGYQTMDVLAAIAFGGIVARALSAKNVTKTKDIVKYTISAGFVSVILLAGLYFSLFYLGATSAAVAEGATNGGQIFSRYVNVLFGSAGTWIMAGIIVLASLTTLVGVTSASADYFSKFSVRFSYPFWAALFTAMTITVSQYGLTDLLRITIPALLLIYPVAIVLVLLQFLRKKLPSIKFTYNSTLLVTVCFSLCDSLNNVKMLPESINSLLKHFPLSSEGMAWLVPTLVMLVASIFIGKALHKTHS</sequence>
<dbReference type="EMBL" id="L42023">
    <property type="protein sequence ID" value="AAC21896.1"/>
    <property type="molecule type" value="Genomic_DNA"/>
</dbReference>
<dbReference type="PIR" id="D64056">
    <property type="entry name" value="D64056"/>
</dbReference>
<dbReference type="RefSeq" id="NP_438398.1">
    <property type="nucleotide sequence ID" value="NC_000907.1"/>
</dbReference>
<dbReference type="STRING" id="71421.HI_0226"/>
<dbReference type="EnsemblBacteria" id="AAC21896">
    <property type="protein sequence ID" value="AAC21896"/>
    <property type="gene ID" value="HI_0226"/>
</dbReference>
<dbReference type="KEGG" id="hin:HI_0226"/>
<dbReference type="PATRIC" id="fig|71421.8.peg.240"/>
<dbReference type="eggNOG" id="COG1114">
    <property type="taxonomic scope" value="Bacteria"/>
</dbReference>
<dbReference type="HOGENOM" id="CLU_036807_0_1_6"/>
<dbReference type="OrthoDB" id="9783920at2"/>
<dbReference type="PhylomeDB" id="P71345"/>
<dbReference type="BioCyc" id="HINF71421:G1GJ1-243-MONOMER"/>
<dbReference type="Proteomes" id="UP000000579">
    <property type="component" value="Chromosome"/>
</dbReference>
<dbReference type="GO" id="GO:0005886">
    <property type="term" value="C:plasma membrane"/>
    <property type="evidence" value="ECO:0000318"/>
    <property type="project" value="GO_Central"/>
</dbReference>
<dbReference type="GO" id="GO:0015188">
    <property type="term" value="F:L-isoleucine transmembrane transporter activity"/>
    <property type="evidence" value="ECO:0000318"/>
    <property type="project" value="GO_Central"/>
</dbReference>
<dbReference type="GO" id="GO:0015190">
    <property type="term" value="F:L-leucine transmembrane transporter activity"/>
    <property type="evidence" value="ECO:0000318"/>
    <property type="project" value="GO_Central"/>
</dbReference>
<dbReference type="GO" id="GO:0005304">
    <property type="term" value="F:L-valine transmembrane transporter activity"/>
    <property type="evidence" value="ECO:0000318"/>
    <property type="project" value="GO_Central"/>
</dbReference>
<dbReference type="GO" id="GO:0015818">
    <property type="term" value="P:isoleucine transport"/>
    <property type="evidence" value="ECO:0000318"/>
    <property type="project" value="GO_Central"/>
</dbReference>
<dbReference type="GO" id="GO:0015820">
    <property type="term" value="P:L-leucine transport"/>
    <property type="evidence" value="ECO:0000318"/>
    <property type="project" value="GO_Central"/>
</dbReference>
<dbReference type="GO" id="GO:0015829">
    <property type="term" value="P:valine transport"/>
    <property type="evidence" value="ECO:0000318"/>
    <property type="project" value="GO_Central"/>
</dbReference>
<dbReference type="InterPro" id="IPR004685">
    <property type="entry name" value="Brnchd-chn_aa_trnsp_Livcs"/>
</dbReference>
<dbReference type="NCBIfam" id="TIGR00796">
    <property type="entry name" value="livcs"/>
    <property type="match status" value="1"/>
</dbReference>
<dbReference type="PANTHER" id="PTHR30588:SF0">
    <property type="entry name" value="BRANCHED-CHAIN AMINO ACID PERMEASE BRNQ"/>
    <property type="match status" value="1"/>
</dbReference>
<dbReference type="PANTHER" id="PTHR30588">
    <property type="entry name" value="BRANCHED-CHAIN AMINO ACID TRANSPORT SYSTEM 2 CARRIER PROTEIN"/>
    <property type="match status" value="1"/>
</dbReference>
<dbReference type="Pfam" id="PF05525">
    <property type="entry name" value="Branch_AA_trans"/>
    <property type="match status" value="1"/>
</dbReference>